<feature type="chain" id="PRO_0000185469" description="Phosphatidylinositol 5-phosphate 4-kinase type-2 alpha">
    <location>
        <begin position="1"/>
        <end position="405"/>
    </location>
</feature>
<feature type="domain" description="PIPK" evidence="4">
    <location>
        <begin position="32"/>
        <end position="404"/>
    </location>
</feature>
<feature type="region of interest" description="Disordered" evidence="5">
    <location>
        <begin position="287"/>
        <end position="326"/>
    </location>
</feature>
<feature type="compositionally biased region" description="Acidic residues" evidence="5">
    <location>
        <begin position="288"/>
        <end position="303"/>
    </location>
</feature>
<reference key="1">
    <citation type="journal article" date="2005" name="Genome Biol.">
        <title>Full-length cDNAs from chicken bursal lymphocytes to facilitate gene function analysis.</title>
        <authorList>
            <person name="Caldwell R.B."/>
            <person name="Kierzek A.M."/>
            <person name="Arakawa H."/>
            <person name="Bezzubov Y."/>
            <person name="Zaim J."/>
            <person name="Fiedler P."/>
            <person name="Kutter S."/>
            <person name="Blagodatski A."/>
            <person name="Kostovska D."/>
            <person name="Koter M."/>
            <person name="Plachy J."/>
            <person name="Carninci P."/>
            <person name="Hayashizaki Y."/>
            <person name="Buerstedde J.-M."/>
        </authorList>
    </citation>
    <scope>NUCLEOTIDE SEQUENCE [LARGE SCALE MRNA]</scope>
    <source>
        <strain>CB</strain>
        <tissue>Bursa of Fabricius</tissue>
    </source>
</reference>
<comment type="function">
    <text evidence="2">Catalyzes the phosphorylation of phosphatidylinositol 5-phosphate (PtdIns5P) on the fourth hydroxyl of the myo-inositol ring, to form phosphatidylinositol 4,5-bisphosphate (PtdIns(4,5)P2). Has both ATP- and GTP-dependent kinase activities.</text>
</comment>
<comment type="catalytic activity">
    <reaction evidence="2">
        <text>a 1,2-diacyl-sn-glycero-3-phospho-(1D-myo-inositol-5-phosphate) + ATP = a 1,2-diacyl-sn-glycero-3-phospho-(1D-myo-inositol-4,5-bisphosphate) + ADP + H(+)</text>
        <dbReference type="Rhea" id="RHEA:12280"/>
        <dbReference type="ChEBI" id="CHEBI:15378"/>
        <dbReference type="ChEBI" id="CHEBI:30616"/>
        <dbReference type="ChEBI" id="CHEBI:57795"/>
        <dbReference type="ChEBI" id="CHEBI:58456"/>
        <dbReference type="ChEBI" id="CHEBI:456216"/>
        <dbReference type="EC" id="2.7.1.149"/>
    </reaction>
    <physiologicalReaction direction="left-to-right" evidence="2">
        <dbReference type="Rhea" id="RHEA:12281"/>
    </physiologicalReaction>
</comment>
<comment type="catalytic activity">
    <reaction evidence="2">
        <text>1,2-dihexadecanoyl-sn-glycero-3-phospho-(1D-myo-inositol-5-phosphate) + ATP = 1,2-dihexadecanoyl-sn-glycero-3-phospho-(1D-myo-inositol-4,5-bisphosphate) + ADP + H(+)</text>
        <dbReference type="Rhea" id="RHEA:55992"/>
        <dbReference type="ChEBI" id="CHEBI:15378"/>
        <dbReference type="ChEBI" id="CHEBI:30616"/>
        <dbReference type="ChEBI" id="CHEBI:83423"/>
        <dbReference type="ChEBI" id="CHEBI:84968"/>
        <dbReference type="ChEBI" id="CHEBI:456216"/>
    </reaction>
    <physiologicalReaction direction="left-to-right" evidence="2">
        <dbReference type="Rhea" id="RHEA:55993"/>
    </physiologicalReaction>
</comment>
<comment type="catalytic activity">
    <reaction evidence="2">
        <text>1,2-dihexadecanoyl-sn-glycero-3-phospho-(1D-myo-inositol-5-phosphate) + GTP = 1,2-dihexadecanoyl-sn-glycero-3-phospho-(1D-myo-inositol-4,5-bisphosphate) + GDP + H(+)</text>
        <dbReference type="Rhea" id="RHEA:55964"/>
        <dbReference type="ChEBI" id="CHEBI:15378"/>
        <dbReference type="ChEBI" id="CHEBI:37565"/>
        <dbReference type="ChEBI" id="CHEBI:58189"/>
        <dbReference type="ChEBI" id="CHEBI:83423"/>
        <dbReference type="ChEBI" id="CHEBI:84968"/>
    </reaction>
    <physiologicalReaction direction="left-to-right" evidence="2">
        <dbReference type="Rhea" id="RHEA:55965"/>
    </physiologicalReaction>
</comment>
<comment type="activity regulation">
    <text evidence="3">In rod outer segments, activated by light.</text>
</comment>
<comment type="subunit">
    <text evidence="2">Homodimer.</text>
</comment>
<comment type="subcellular location">
    <subcellularLocation>
        <location evidence="1">Cell membrane</location>
    </subcellularLocation>
    <subcellularLocation>
        <location evidence="2">Nucleus</location>
    </subcellularLocation>
    <subcellularLocation>
        <location evidence="1">Lysosome</location>
    </subcellularLocation>
    <subcellularLocation>
        <location evidence="2">Cytoplasm</location>
    </subcellularLocation>
</comment>
<comment type="PTM">
    <text evidence="3">Phosphorylated in tyrosines. Phosphorylation is induced by light and increases kinase activity.</text>
</comment>
<protein>
    <recommendedName>
        <fullName evidence="6">Phosphatidylinositol 5-phosphate 4-kinase type-2 alpha</fullName>
        <ecNumber evidence="2">2.7.1.149</ecNumber>
    </recommendedName>
    <alternativeName>
        <fullName>1-phosphatidylinositol 5-phosphate 4-kinase 2-alpha</fullName>
    </alternativeName>
    <alternativeName>
        <fullName>Diphosphoinositide kinase 2-alpha</fullName>
    </alternativeName>
    <alternativeName>
        <fullName>Phosphatidylinositol 5-phosphate 4-kinase type II alpha</fullName>
        <shortName>PI(5)P 4-kinase type II alpha</shortName>
        <shortName>PIP4KII-alpha</shortName>
    </alternativeName>
    <alternativeName>
        <fullName>PtdIns(5)P-4-kinase isoform 2-alpha</fullName>
    </alternativeName>
</protein>
<dbReference type="EC" id="2.7.1.149" evidence="2"/>
<dbReference type="EMBL" id="AJ851794">
    <property type="protein sequence ID" value="CAH65428.1"/>
    <property type="molecule type" value="mRNA"/>
</dbReference>
<dbReference type="RefSeq" id="NP_001026142.1">
    <property type="nucleotide sequence ID" value="NM_001030971.1"/>
</dbReference>
<dbReference type="SMR" id="Q5F356"/>
<dbReference type="FunCoup" id="Q5F356">
    <property type="interactions" value="630"/>
</dbReference>
<dbReference type="STRING" id="9031.ENSGALP00000012779"/>
<dbReference type="PaxDb" id="9031-ENSGALP00000042061"/>
<dbReference type="GeneID" id="420504"/>
<dbReference type="KEGG" id="gga:420504"/>
<dbReference type="CTD" id="5305"/>
<dbReference type="VEuPathDB" id="HostDB:geneid_420504"/>
<dbReference type="eggNOG" id="KOG0229">
    <property type="taxonomic scope" value="Eukaryota"/>
</dbReference>
<dbReference type="HOGENOM" id="CLU_004312_7_0_1"/>
<dbReference type="InParanoid" id="Q5F356"/>
<dbReference type="OrthoDB" id="20783at2759"/>
<dbReference type="PhylomeDB" id="Q5F356"/>
<dbReference type="PRO" id="PR:Q5F356"/>
<dbReference type="Proteomes" id="UP000000539">
    <property type="component" value="Unassembled WGS sequence"/>
</dbReference>
<dbReference type="GO" id="GO:0005829">
    <property type="term" value="C:cytosol"/>
    <property type="evidence" value="ECO:0007669"/>
    <property type="project" value="GOC"/>
</dbReference>
<dbReference type="GO" id="GO:0005764">
    <property type="term" value="C:lysosome"/>
    <property type="evidence" value="ECO:0000250"/>
    <property type="project" value="UniProtKB"/>
</dbReference>
<dbReference type="GO" id="GO:0005634">
    <property type="term" value="C:nucleus"/>
    <property type="evidence" value="ECO:0007669"/>
    <property type="project" value="UniProtKB-SubCell"/>
</dbReference>
<dbReference type="GO" id="GO:0005886">
    <property type="term" value="C:plasma membrane"/>
    <property type="evidence" value="ECO:0000318"/>
    <property type="project" value="GO_Central"/>
</dbReference>
<dbReference type="GO" id="GO:0016308">
    <property type="term" value="F:1-phosphatidylinositol-4-phosphate 5-kinase activity"/>
    <property type="evidence" value="ECO:0000250"/>
    <property type="project" value="UniProtKB"/>
</dbReference>
<dbReference type="GO" id="GO:0016309">
    <property type="term" value="F:1-phosphatidylinositol-5-phosphate 4-kinase activity"/>
    <property type="evidence" value="ECO:0000318"/>
    <property type="project" value="GO_Central"/>
</dbReference>
<dbReference type="GO" id="GO:0005524">
    <property type="term" value="F:ATP binding"/>
    <property type="evidence" value="ECO:0007669"/>
    <property type="project" value="UniProtKB-KW"/>
</dbReference>
<dbReference type="GO" id="GO:0042803">
    <property type="term" value="F:protein homodimerization activity"/>
    <property type="evidence" value="ECO:0000250"/>
    <property type="project" value="UniProtKB"/>
</dbReference>
<dbReference type="GO" id="GO:1902635">
    <property type="term" value="P:1-phosphatidyl-1D-myo-inositol 4,5-bisphosphate biosynthetic process"/>
    <property type="evidence" value="ECO:0000250"/>
    <property type="project" value="UniProtKB"/>
</dbReference>
<dbReference type="GO" id="GO:0061909">
    <property type="term" value="P:autophagosome-lysosome fusion"/>
    <property type="evidence" value="ECO:0000250"/>
    <property type="project" value="UniProtKB"/>
</dbReference>
<dbReference type="GO" id="GO:0046854">
    <property type="term" value="P:phosphatidylinositol phosphate biosynthetic process"/>
    <property type="evidence" value="ECO:0000318"/>
    <property type="project" value="GO_Central"/>
</dbReference>
<dbReference type="GO" id="GO:0010506">
    <property type="term" value="P:regulation of autophagy"/>
    <property type="evidence" value="ECO:0000250"/>
    <property type="project" value="UniProtKB"/>
</dbReference>
<dbReference type="GO" id="GO:0090119">
    <property type="term" value="P:vesicle-mediated cholesterol transport"/>
    <property type="evidence" value="ECO:0000250"/>
    <property type="project" value="UniProtKB"/>
</dbReference>
<dbReference type="CDD" id="cd17309">
    <property type="entry name" value="PIPKc_PIP5K2A"/>
    <property type="match status" value="1"/>
</dbReference>
<dbReference type="FunFam" id="3.30.800.10:FF:000002">
    <property type="entry name" value="Phosphatidylinositol 5-phosphate 4-kinase type-2 beta"/>
    <property type="match status" value="1"/>
</dbReference>
<dbReference type="FunFam" id="3.30.810.10:FF:000003">
    <property type="entry name" value="Phosphatidylinositol 5-phosphate 4-kinase type-2 beta"/>
    <property type="match status" value="1"/>
</dbReference>
<dbReference type="FunFam" id="3.30.810.10:FF:000004">
    <property type="entry name" value="Phosphatidylinositol 5-phosphate 4-kinase type-2 beta"/>
    <property type="match status" value="1"/>
</dbReference>
<dbReference type="Gene3D" id="3.30.810.10">
    <property type="entry name" value="2-Layer Sandwich"/>
    <property type="match status" value="2"/>
</dbReference>
<dbReference type="Gene3D" id="3.30.800.10">
    <property type="entry name" value="Phosphatidylinositol Phosphate Kinase II Beta"/>
    <property type="match status" value="1"/>
</dbReference>
<dbReference type="InterPro" id="IPR027483">
    <property type="entry name" value="PInositol-4-P-4/5-kinase_C_sf"/>
</dbReference>
<dbReference type="InterPro" id="IPR002498">
    <property type="entry name" value="PInositol-4-P-4/5-kinase_core"/>
</dbReference>
<dbReference type="InterPro" id="IPR027484">
    <property type="entry name" value="PInositol-4-P-5-kinase_N"/>
</dbReference>
<dbReference type="InterPro" id="IPR023610">
    <property type="entry name" value="PInositol-4/5-P-5/4-kinase"/>
</dbReference>
<dbReference type="PANTHER" id="PTHR23086:SF21">
    <property type="entry name" value="PHOSPHATIDYLINOSITOL 5-PHOSPHATE 4-KINASE TYPE-2 ALPHA"/>
    <property type="match status" value="1"/>
</dbReference>
<dbReference type="PANTHER" id="PTHR23086">
    <property type="entry name" value="PHOSPHATIDYLINOSITOL-4-PHOSPHATE 5-KINASE"/>
    <property type="match status" value="1"/>
</dbReference>
<dbReference type="Pfam" id="PF01504">
    <property type="entry name" value="PIP5K"/>
    <property type="match status" value="1"/>
</dbReference>
<dbReference type="SMART" id="SM00330">
    <property type="entry name" value="PIPKc"/>
    <property type="match status" value="1"/>
</dbReference>
<dbReference type="SUPFAM" id="SSF56104">
    <property type="entry name" value="SAICAR synthase-like"/>
    <property type="match status" value="1"/>
</dbReference>
<dbReference type="PROSITE" id="PS51455">
    <property type="entry name" value="PIPK"/>
    <property type="match status" value="1"/>
</dbReference>
<evidence type="ECO:0000250" key="1">
    <source>
        <dbReference type="UniProtKB" id="O70172"/>
    </source>
</evidence>
<evidence type="ECO:0000250" key="2">
    <source>
        <dbReference type="UniProtKB" id="P48426"/>
    </source>
</evidence>
<evidence type="ECO:0000250" key="3">
    <source>
        <dbReference type="UniProtKB" id="Q9R0I8"/>
    </source>
</evidence>
<evidence type="ECO:0000255" key="4">
    <source>
        <dbReference type="PROSITE-ProRule" id="PRU00781"/>
    </source>
</evidence>
<evidence type="ECO:0000256" key="5">
    <source>
        <dbReference type="SAM" id="MobiDB-lite"/>
    </source>
</evidence>
<evidence type="ECO:0000305" key="6"/>
<name>PI42A_CHICK</name>
<gene>
    <name type="primary">PIP4K2A</name>
    <name type="synonym">PIP5K2A</name>
    <name type="ORF">RCJMB04_33l24</name>
</gene>
<accession>Q5F356</accession>
<organism>
    <name type="scientific">Gallus gallus</name>
    <name type="common">Chicken</name>
    <dbReference type="NCBI Taxonomy" id="9031"/>
    <lineage>
        <taxon>Eukaryota</taxon>
        <taxon>Metazoa</taxon>
        <taxon>Chordata</taxon>
        <taxon>Craniata</taxon>
        <taxon>Vertebrata</taxon>
        <taxon>Euteleostomi</taxon>
        <taxon>Archelosauria</taxon>
        <taxon>Archosauria</taxon>
        <taxon>Dinosauria</taxon>
        <taxon>Saurischia</taxon>
        <taxon>Theropoda</taxon>
        <taxon>Coelurosauria</taxon>
        <taxon>Aves</taxon>
        <taxon>Neognathae</taxon>
        <taxon>Galloanserae</taxon>
        <taxon>Galliformes</taxon>
        <taxon>Phasianidae</taxon>
        <taxon>Phasianinae</taxon>
        <taxon>Gallus</taxon>
    </lineage>
</organism>
<sequence length="405" mass="46092">MAAPGTVASVMASKTKTKKKHFVVQKVKLFRASDPLLSVLMWGVNHSINELSHVQIPVMLMPDDFKAYSKIKVDNHLFNKENMPSHFKFKEYCPMVFRNLRERFGIDDQDFQNSLTRSAPLANDSQARSGARFHTSYDKRYIIKTITSEDVAEMHNILKKYHQFIVECHGNTLLPQFLGMYRLTVDGVEIYMIVTRNVFSHRLSVYRKYDLKGSTVAREASDKEKAKELPTFKDNDFINDGQKIHIDENNKRMFLEKLKKDVEFLAQLKLMDYSLLVGIHDVERAEQEEVECEENDGEDEGESDGTHPIGTPPDSPGNTLNSSLPLAPGEFDPAIDVYGIKSHESAPRKEVYFMAIIDILTHYDAKKKAAHAAKTVKHGAGAEISTVNPEQYSKRFLDFIANILT</sequence>
<keyword id="KW-0067">ATP-binding</keyword>
<keyword id="KW-1003">Cell membrane</keyword>
<keyword id="KW-0963">Cytoplasm</keyword>
<keyword id="KW-0418">Kinase</keyword>
<keyword id="KW-0443">Lipid metabolism</keyword>
<keyword id="KW-0458">Lysosome</keyword>
<keyword id="KW-0472">Membrane</keyword>
<keyword id="KW-0547">Nucleotide-binding</keyword>
<keyword id="KW-0539">Nucleus</keyword>
<keyword id="KW-1185">Reference proteome</keyword>
<keyword id="KW-0808">Transferase</keyword>
<proteinExistence type="evidence at transcript level"/>